<sequence>MAHKKGASSTRNGRDSNAQRLGVKRFGGQVVNAGEILVRQRGTHFHPGSGVGRGKDDTLFALDAGAVEFGTHRGRKVVNIVPVA</sequence>
<feature type="chain" id="PRO_0000181174" description="Large ribosomal subunit protein bL27">
    <location>
        <begin position="1"/>
        <end position="84"/>
    </location>
</feature>
<feature type="region of interest" description="Disordered" evidence="2">
    <location>
        <begin position="1"/>
        <end position="22"/>
    </location>
</feature>
<feature type="compositionally biased region" description="Polar residues" evidence="2">
    <location>
        <begin position="7"/>
        <end position="19"/>
    </location>
</feature>
<reference key="1">
    <citation type="journal article" date="2001" name="Proc. Natl. Acad. Sci. U.S.A.">
        <title>Genome sequence of an industrial microorganism Streptomyces avermitilis: deducing the ability of producing secondary metabolites.</title>
        <authorList>
            <person name="Omura S."/>
            <person name="Ikeda H."/>
            <person name="Ishikawa J."/>
            <person name="Hanamoto A."/>
            <person name="Takahashi C."/>
            <person name="Shinose M."/>
            <person name="Takahashi Y."/>
            <person name="Horikawa H."/>
            <person name="Nakazawa H."/>
            <person name="Osonoe T."/>
            <person name="Kikuchi H."/>
            <person name="Shiba T."/>
            <person name="Sakaki Y."/>
            <person name="Hattori M."/>
        </authorList>
    </citation>
    <scope>NUCLEOTIDE SEQUENCE [LARGE SCALE GENOMIC DNA]</scope>
    <source>
        <strain>ATCC 31267 / DSM 46492 / JCM 5070 / NBRC 14893 / NCIMB 12804 / NRRL 8165 / MA-4680</strain>
    </source>
</reference>
<reference key="2">
    <citation type="journal article" date="2003" name="Nat. Biotechnol.">
        <title>Complete genome sequence and comparative analysis of the industrial microorganism Streptomyces avermitilis.</title>
        <authorList>
            <person name="Ikeda H."/>
            <person name="Ishikawa J."/>
            <person name="Hanamoto A."/>
            <person name="Shinose M."/>
            <person name="Kikuchi H."/>
            <person name="Shiba T."/>
            <person name="Sakaki Y."/>
            <person name="Hattori M."/>
            <person name="Omura S."/>
        </authorList>
    </citation>
    <scope>NUCLEOTIDE SEQUENCE [LARGE SCALE GENOMIC DNA]</scope>
    <source>
        <strain>ATCC 31267 / DSM 46492 / JCM 5070 / NBRC 14893 / NCIMB 12804 / NRRL 8165 / MA-4680</strain>
    </source>
</reference>
<comment type="similarity">
    <text evidence="1">Belongs to the bacterial ribosomal protein bL27 family.</text>
</comment>
<gene>
    <name evidence="1" type="primary">rpmA</name>
    <name type="ordered locus">SAV_5468</name>
</gene>
<organism>
    <name type="scientific">Streptomyces avermitilis (strain ATCC 31267 / DSM 46492 / JCM 5070 / NBRC 14893 / NCIMB 12804 / NRRL 8165 / MA-4680)</name>
    <dbReference type="NCBI Taxonomy" id="227882"/>
    <lineage>
        <taxon>Bacteria</taxon>
        <taxon>Bacillati</taxon>
        <taxon>Actinomycetota</taxon>
        <taxon>Actinomycetes</taxon>
        <taxon>Kitasatosporales</taxon>
        <taxon>Streptomycetaceae</taxon>
        <taxon>Streptomyces</taxon>
    </lineage>
</organism>
<keyword id="KW-1185">Reference proteome</keyword>
<keyword id="KW-0687">Ribonucleoprotein</keyword>
<keyword id="KW-0689">Ribosomal protein</keyword>
<proteinExistence type="inferred from homology"/>
<dbReference type="EMBL" id="BA000030">
    <property type="protein sequence ID" value="BAC73180.1"/>
    <property type="molecule type" value="Genomic_DNA"/>
</dbReference>
<dbReference type="RefSeq" id="WP_010986870.1">
    <property type="nucleotide sequence ID" value="NZ_JZJK01000066.1"/>
</dbReference>
<dbReference type="SMR" id="Q82C86"/>
<dbReference type="GeneID" id="41542560"/>
<dbReference type="KEGG" id="sma:SAVERM_5468"/>
<dbReference type="eggNOG" id="COG0211">
    <property type="taxonomic scope" value="Bacteria"/>
</dbReference>
<dbReference type="HOGENOM" id="CLU_095424_4_0_11"/>
<dbReference type="OrthoDB" id="9803474at2"/>
<dbReference type="Proteomes" id="UP000000428">
    <property type="component" value="Chromosome"/>
</dbReference>
<dbReference type="GO" id="GO:0022625">
    <property type="term" value="C:cytosolic large ribosomal subunit"/>
    <property type="evidence" value="ECO:0007669"/>
    <property type="project" value="TreeGrafter"/>
</dbReference>
<dbReference type="GO" id="GO:0003735">
    <property type="term" value="F:structural constituent of ribosome"/>
    <property type="evidence" value="ECO:0007669"/>
    <property type="project" value="InterPro"/>
</dbReference>
<dbReference type="GO" id="GO:0006412">
    <property type="term" value="P:translation"/>
    <property type="evidence" value="ECO:0007669"/>
    <property type="project" value="UniProtKB-UniRule"/>
</dbReference>
<dbReference type="FunFam" id="2.40.50.100:FF:000020">
    <property type="entry name" value="50S ribosomal protein L27"/>
    <property type="match status" value="1"/>
</dbReference>
<dbReference type="Gene3D" id="2.40.50.100">
    <property type="match status" value="1"/>
</dbReference>
<dbReference type="HAMAP" id="MF_00539">
    <property type="entry name" value="Ribosomal_bL27"/>
    <property type="match status" value="1"/>
</dbReference>
<dbReference type="InterPro" id="IPR001684">
    <property type="entry name" value="Ribosomal_bL27"/>
</dbReference>
<dbReference type="InterPro" id="IPR018261">
    <property type="entry name" value="Ribosomal_bL27_CS"/>
</dbReference>
<dbReference type="NCBIfam" id="TIGR00062">
    <property type="entry name" value="L27"/>
    <property type="match status" value="1"/>
</dbReference>
<dbReference type="PANTHER" id="PTHR15893:SF0">
    <property type="entry name" value="LARGE RIBOSOMAL SUBUNIT PROTEIN BL27M"/>
    <property type="match status" value="1"/>
</dbReference>
<dbReference type="PANTHER" id="PTHR15893">
    <property type="entry name" value="RIBOSOMAL PROTEIN L27"/>
    <property type="match status" value="1"/>
</dbReference>
<dbReference type="Pfam" id="PF01016">
    <property type="entry name" value="Ribosomal_L27"/>
    <property type="match status" value="1"/>
</dbReference>
<dbReference type="PRINTS" id="PR00063">
    <property type="entry name" value="RIBOSOMALL27"/>
</dbReference>
<dbReference type="SUPFAM" id="SSF110324">
    <property type="entry name" value="Ribosomal L27 protein-like"/>
    <property type="match status" value="1"/>
</dbReference>
<dbReference type="PROSITE" id="PS00831">
    <property type="entry name" value="RIBOSOMAL_L27"/>
    <property type="match status" value="1"/>
</dbReference>
<name>RL27_STRAW</name>
<evidence type="ECO:0000255" key="1">
    <source>
        <dbReference type="HAMAP-Rule" id="MF_00539"/>
    </source>
</evidence>
<evidence type="ECO:0000256" key="2">
    <source>
        <dbReference type="SAM" id="MobiDB-lite"/>
    </source>
</evidence>
<evidence type="ECO:0000305" key="3"/>
<accession>Q82C86</accession>
<protein>
    <recommendedName>
        <fullName evidence="1">Large ribosomal subunit protein bL27</fullName>
    </recommendedName>
    <alternativeName>
        <fullName evidence="3">50S ribosomal protein L27</fullName>
    </alternativeName>
</protein>